<evidence type="ECO:0000250" key="1"/>
<evidence type="ECO:0000250" key="2">
    <source>
        <dbReference type="UniProtKB" id="P04040"/>
    </source>
</evidence>
<evidence type="ECO:0000250" key="3">
    <source>
        <dbReference type="UniProtKB" id="P25819"/>
    </source>
</evidence>
<evidence type="ECO:0000255" key="4">
    <source>
        <dbReference type="PROSITE-ProRule" id="PRU10013"/>
    </source>
</evidence>
<evidence type="ECO:0000305" key="5"/>
<organism>
    <name type="scientific">Nicotiana tabacum</name>
    <name type="common">Common tobacco</name>
    <dbReference type="NCBI Taxonomy" id="4097"/>
    <lineage>
        <taxon>Eukaryota</taxon>
        <taxon>Viridiplantae</taxon>
        <taxon>Streptophyta</taxon>
        <taxon>Embryophyta</taxon>
        <taxon>Tracheophyta</taxon>
        <taxon>Spermatophyta</taxon>
        <taxon>Magnoliopsida</taxon>
        <taxon>eudicotyledons</taxon>
        <taxon>Gunneridae</taxon>
        <taxon>Pentapetalae</taxon>
        <taxon>asterids</taxon>
        <taxon>lamiids</taxon>
        <taxon>Solanales</taxon>
        <taxon>Solanaceae</taxon>
        <taxon>Nicotianoideae</taxon>
        <taxon>Nicotianeae</taxon>
        <taxon>Nicotiana</taxon>
    </lineage>
</organism>
<gene>
    <name type="primary">CAT-1</name>
</gene>
<keyword id="KW-0963">Cytoplasm</keyword>
<keyword id="KW-0903">Direct protein sequencing</keyword>
<keyword id="KW-0349">Heme</keyword>
<keyword id="KW-0376">Hydrogen peroxide</keyword>
<keyword id="KW-0408">Iron</keyword>
<keyword id="KW-0479">Metal-binding</keyword>
<keyword id="KW-0560">Oxidoreductase</keyword>
<keyword id="KW-0575">Peroxidase</keyword>
<keyword id="KW-0576">Peroxisome</keyword>
<keyword id="KW-1185">Reference proteome</keyword>
<protein>
    <recommendedName>
        <fullName>Catalase isozyme 1</fullName>
        <ecNumber evidence="4">1.11.1.6</ecNumber>
    </recommendedName>
    <alternativeName>
        <fullName>Salicylic acid-binding protein</fullName>
        <shortName>SABP</shortName>
    </alternativeName>
</protein>
<proteinExistence type="evidence at protein level"/>
<reference key="1">
    <citation type="journal article" date="1994" name="Plant Physiol.">
        <title>The primary leaf catalase gene from Nicotiana tabacum and Nicotiana sylvestris.</title>
        <authorList>
            <person name="Schultes N.P."/>
            <person name="Zelitch I."/>
            <person name="McGonigle B."/>
            <person name="Nelson T."/>
        </authorList>
    </citation>
    <scope>NUCLEOTIDE SEQUENCE [MRNA]</scope>
    <source>
        <strain>cv. Petit Havana SR1</strain>
        <tissue>Leaf</tissue>
    </source>
</reference>
<reference key="2">
    <citation type="journal article" date="1993" name="Science">
        <title>Active oxygen species in the induction of plant systemic acquired resistance by salicylic acid.</title>
        <authorList>
            <person name="Chen Z."/>
            <person name="Silva H."/>
            <person name="Klessig D.F."/>
        </authorList>
    </citation>
    <scope>NUCLEOTIDE SEQUENCE [MRNA] OF 4-492</scope>
    <scope>PARTIAL PROTEIN SEQUENCE</scope>
    <source>
        <strain>cv. SR1</strain>
        <strain>cv. Xanthi NC</strain>
        <tissue>Leaf</tissue>
    </source>
</reference>
<name>CATA1_TOBAC</name>
<comment type="function">
    <text evidence="2">Catalyzes the degradation of hydrogen peroxide (H(2)O(2)) generated by peroxisomal oxidases to water and oxygen, thereby protecting cells from the toxic effects of hydrogen peroxide.</text>
</comment>
<comment type="catalytic activity">
    <reaction evidence="4">
        <text>2 H2O2 = O2 + 2 H2O</text>
        <dbReference type="Rhea" id="RHEA:20309"/>
        <dbReference type="ChEBI" id="CHEBI:15377"/>
        <dbReference type="ChEBI" id="CHEBI:15379"/>
        <dbReference type="ChEBI" id="CHEBI:16240"/>
        <dbReference type="EC" id="1.11.1.6"/>
    </reaction>
</comment>
<comment type="cofactor">
    <cofactor evidence="2">
        <name>heme</name>
        <dbReference type="ChEBI" id="CHEBI:30413"/>
    </cofactor>
</comment>
<comment type="activity regulation">
    <text>Inhibited by salicylic acid.</text>
</comment>
<comment type="subunit">
    <text evidence="1">Homotetramer.</text>
</comment>
<comment type="subcellular location">
    <subcellularLocation>
        <location evidence="3">Cytoplasm</location>
        <location evidence="3">Cytosol</location>
    </subcellularLocation>
    <subcellularLocation>
        <location evidence="3">Peroxisome matrix</location>
    </subcellularLocation>
</comment>
<comment type="similarity">
    <text evidence="5">Belongs to the catalase family.</text>
</comment>
<sequence>MDLSKFRPSSAYDSPFLTTNAGGPVYNNVSSLTVGPRGPVLLEDYHLIEKLATFDRERIPERVVHARGASAKGFFEVTHDISHLTCADFLRAPGVQTPVICRFSTVVHERGSPESLRDIRGFAVKFYTREGNFDLVGNNVPVFFNRDAKSFPDTIRALKPNPKSHIQEYWKILDFFSFLPESLHTFAWFFDDVCLPTDYRHMEGYGVHAYQLINKAGKAHYVKFHWKPTCGVKCMSEEEAIRVGGTNHSHATKDLYDSIAAGNYPEWKLFIQIMDTEDVDKFDFDPLDVTKTWPEDILPLMPVGRLVLNRNIDNFFAENEQLAFNPGHIVPGLYYSEDKLLQTRIFAYADTQRHRIGPNYMQLPVNAPKCAHHNNHRDGAMNFMHRDEEVDYLPSRFDPCRHAEQYPIPSRVLTGRREMCVIEKENNFKQAGERYRSWEPDRQDRYVSKWVEHLSDPRVTYEIRSIWISYLSQADKSCGQKVASRLTLKPTM</sequence>
<feature type="chain" id="PRO_0000084966" description="Catalase isozyme 1">
    <location>
        <begin position="1"/>
        <end position="492"/>
    </location>
</feature>
<feature type="active site" evidence="4">
    <location>
        <position position="65"/>
    </location>
</feature>
<feature type="active site" evidence="4">
    <location>
        <position position="138"/>
    </location>
</feature>
<feature type="binding site" description="axial binding residue" evidence="2">
    <location>
        <position position="348"/>
    </location>
    <ligand>
        <name>heme</name>
        <dbReference type="ChEBI" id="CHEBI:30413"/>
    </ligand>
    <ligandPart>
        <name>Fe</name>
        <dbReference type="ChEBI" id="CHEBI:18248"/>
    </ligandPart>
</feature>
<feature type="sequence conflict" description="In Ref. 2; AA sequence." evidence="5" ref="2">
    <original>V</original>
    <variation>F</variation>
    <location>
        <position position="140"/>
    </location>
</feature>
<feature type="sequence conflict" description="In Ref. 2; AA sequence." evidence="5" ref="2">
    <original>N</original>
    <variation>I</variation>
    <location>
        <position position="145"/>
    </location>
</feature>
<feature type="sequence conflict" description="In Ref. 2; AAC48918." evidence="5" ref="2">
    <original>K</original>
    <variation>R</variation>
    <location>
        <position position="171"/>
    </location>
</feature>
<feature type="sequence conflict" description="In Ref. 2; AA sequence." evidence="5" ref="2">
    <original>W</original>
    <variation>F</variation>
    <location>
        <position position="438"/>
    </location>
</feature>
<feature type="sequence conflict" description="In Ref. 2; AA sequence." evidence="5" ref="2">
    <original>E</original>
    <variation>T</variation>
    <location>
        <position position="439"/>
    </location>
</feature>
<feature type="sequence conflict" description="In Ref. 2; AA sequence." evidence="5" ref="2">
    <original>H</original>
    <variation>A</variation>
    <location>
        <position position="453"/>
    </location>
</feature>
<feature type="sequence conflict" description="In Ref. 2; AAC48918." evidence="5" ref="2">
    <original>SY</original>
    <variation>CS</variation>
    <location>
        <begin position="469"/>
        <end position="470"/>
    </location>
</feature>
<accession>P49319</accession>
<dbReference type="EC" id="1.11.1.6" evidence="4"/>
<dbReference type="EMBL" id="U07627">
    <property type="protein sequence ID" value="AAA57552.1"/>
    <property type="molecule type" value="mRNA"/>
</dbReference>
<dbReference type="EMBL" id="U03473">
    <property type="protein sequence ID" value="AAC48918.1"/>
    <property type="molecule type" value="mRNA"/>
</dbReference>
<dbReference type="PIR" id="A49388">
    <property type="entry name" value="A49388"/>
</dbReference>
<dbReference type="RefSeq" id="NP_001312341.1">
    <property type="nucleotide sequence ID" value="NM_001325412.1"/>
</dbReference>
<dbReference type="SMR" id="P49319"/>
<dbReference type="STRING" id="4097.P49319"/>
<dbReference type="PaxDb" id="4097-P49319"/>
<dbReference type="GeneID" id="107786140"/>
<dbReference type="KEGG" id="nta:107786140"/>
<dbReference type="OrthoDB" id="6880011at2759"/>
<dbReference type="Proteomes" id="UP000084051">
    <property type="component" value="Unplaced"/>
</dbReference>
<dbReference type="GO" id="GO:0005737">
    <property type="term" value="C:cytoplasm"/>
    <property type="evidence" value="ECO:0000318"/>
    <property type="project" value="GO_Central"/>
</dbReference>
<dbReference type="GO" id="GO:0005829">
    <property type="term" value="C:cytosol"/>
    <property type="evidence" value="ECO:0007669"/>
    <property type="project" value="UniProtKB-SubCell"/>
</dbReference>
<dbReference type="GO" id="GO:0005782">
    <property type="term" value="C:peroxisomal matrix"/>
    <property type="evidence" value="ECO:0007669"/>
    <property type="project" value="UniProtKB-SubCell"/>
</dbReference>
<dbReference type="GO" id="GO:0005777">
    <property type="term" value="C:peroxisome"/>
    <property type="evidence" value="ECO:0000318"/>
    <property type="project" value="GO_Central"/>
</dbReference>
<dbReference type="GO" id="GO:0005886">
    <property type="term" value="C:plasma membrane"/>
    <property type="evidence" value="ECO:0000318"/>
    <property type="project" value="GO_Central"/>
</dbReference>
<dbReference type="GO" id="GO:0004096">
    <property type="term" value="F:catalase activity"/>
    <property type="evidence" value="ECO:0000318"/>
    <property type="project" value="GO_Central"/>
</dbReference>
<dbReference type="GO" id="GO:0020037">
    <property type="term" value="F:heme binding"/>
    <property type="evidence" value="ECO:0000318"/>
    <property type="project" value="GO_Central"/>
</dbReference>
<dbReference type="GO" id="GO:0046872">
    <property type="term" value="F:metal ion binding"/>
    <property type="evidence" value="ECO:0007669"/>
    <property type="project" value="UniProtKB-KW"/>
</dbReference>
<dbReference type="GO" id="GO:0042744">
    <property type="term" value="P:hydrogen peroxide catabolic process"/>
    <property type="evidence" value="ECO:0000318"/>
    <property type="project" value="GO_Central"/>
</dbReference>
<dbReference type="GO" id="GO:0042542">
    <property type="term" value="P:response to hydrogen peroxide"/>
    <property type="evidence" value="ECO:0000318"/>
    <property type="project" value="GO_Central"/>
</dbReference>
<dbReference type="CDD" id="cd08154">
    <property type="entry name" value="catalase_clade_1"/>
    <property type="match status" value="1"/>
</dbReference>
<dbReference type="FunFam" id="2.40.180.10:FF:000002">
    <property type="entry name" value="Catalase"/>
    <property type="match status" value="1"/>
</dbReference>
<dbReference type="Gene3D" id="2.40.180.10">
    <property type="entry name" value="Catalase core domain"/>
    <property type="match status" value="1"/>
</dbReference>
<dbReference type="InterPro" id="IPR018028">
    <property type="entry name" value="Catalase"/>
</dbReference>
<dbReference type="InterPro" id="IPR024708">
    <property type="entry name" value="Catalase_AS"/>
</dbReference>
<dbReference type="InterPro" id="IPR024711">
    <property type="entry name" value="Catalase_clade1/3"/>
</dbReference>
<dbReference type="InterPro" id="IPR011614">
    <property type="entry name" value="Catalase_core"/>
</dbReference>
<dbReference type="InterPro" id="IPR002226">
    <property type="entry name" value="Catalase_haem_BS"/>
</dbReference>
<dbReference type="InterPro" id="IPR010582">
    <property type="entry name" value="Catalase_immune_responsive"/>
</dbReference>
<dbReference type="InterPro" id="IPR020835">
    <property type="entry name" value="Catalase_sf"/>
</dbReference>
<dbReference type="PANTHER" id="PTHR11465">
    <property type="entry name" value="CATALASE"/>
    <property type="match status" value="1"/>
</dbReference>
<dbReference type="PANTHER" id="PTHR11465:SF64">
    <property type="entry name" value="CATALASE ISOZYME 1"/>
    <property type="match status" value="1"/>
</dbReference>
<dbReference type="Pfam" id="PF00199">
    <property type="entry name" value="Catalase"/>
    <property type="match status" value="1"/>
</dbReference>
<dbReference type="Pfam" id="PF06628">
    <property type="entry name" value="Catalase-rel"/>
    <property type="match status" value="1"/>
</dbReference>
<dbReference type="PIRSF" id="PIRSF038928">
    <property type="entry name" value="Catalase_clade1-3"/>
    <property type="match status" value="1"/>
</dbReference>
<dbReference type="PRINTS" id="PR00067">
    <property type="entry name" value="CATALASE"/>
</dbReference>
<dbReference type="SMART" id="SM01060">
    <property type="entry name" value="Catalase"/>
    <property type="match status" value="1"/>
</dbReference>
<dbReference type="SUPFAM" id="SSF56634">
    <property type="entry name" value="Heme-dependent catalase-like"/>
    <property type="match status" value="1"/>
</dbReference>
<dbReference type="PROSITE" id="PS00437">
    <property type="entry name" value="CATALASE_1"/>
    <property type="match status" value="1"/>
</dbReference>
<dbReference type="PROSITE" id="PS00438">
    <property type="entry name" value="CATALASE_2"/>
    <property type="match status" value="1"/>
</dbReference>
<dbReference type="PROSITE" id="PS51402">
    <property type="entry name" value="CATALASE_3"/>
    <property type="match status" value="1"/>
</dbReference>